<geneLocation type="chloroplast"/>
<gene>
    <name evidence="1" type="primary">psbZ</name>
</gene>
<organism>
    <name type="scientific">Vitis vinifera</name>
    <name type="common">Grape</name>
    <dbReference type="NCBI Taxonomy" id="29760"/>
    <lineage>
        <taxon>Eukaryota</taxon>
        <taxon>Viridiplantae</taxon>
        <taxon>Streptophyta</taxon>
        <taxon>Embryophyta</taxon>
        <taxon>Tracheophyta</taxon>
        <taxon>Spermatophyta</taxon>
        <taxon>Magnoliopsida</taxon>
        <taxon>eudicotyledons</taxon>
        <taxon>Gunneridae</taxon>
        <taxon>Pentapetalae</taxon>
        <taxon>rosids</taxon>
        <taxon>Vitales</taxon>
        <taxon>Vitaceae</taxon>
        <taxon>Viteae</taxon>
        <taxon>Vitis</taxon>
    </lineage>
</organism>
<protein>
    <recommendedName>
        <fullName evidence="1">Photosystem II reaction center protein Z</fullName>
        <shortName evidence="1">PSII-Z</shortName>
    </recommendedName>
</protein>
<keyword id="KW-0150">Chloroplast</keyword>
<keyword id="KW-0472">Membrane</keyword>
<keyword id="KW-0602">Photosynthesis</keyword>
<keyword id="KW-0604">Photosystem II</keyword>
<keyword id="KW-0934">Plastid</keyword>
<keyword id="KW-0674">Reaction center</keyword>
<keyword id="KW-1185">Reference proteome</keyword>
<keyword id="KW-0793">Thylakoid</keyword>
<keyword id="KW-0812">Transmembrane</keyword>
<keyword id="KW-1133">Transmembrane helix</keyword>
<dbReference type="EMBL" id="DQ424856">
    <property type="protein sequence ID" value="ABE47531.1"/>
    <property type="molecule type" value="Genomic_DNA"/>
</dbReference>
<dbReference type="RefSeq" id="YP_567073.1">
    <property type="nucleotide sequence ID" value="NC_007957.1"/>
</dbReference>
<dbReference type="SMR" id="Q0ZJ23"/>
<dbReference type="FunCoup" id="Q0ZJ23">
    <property type="interactions" value="56"/>
</dbReference>
<dbReference type="STRING" id="29760.Q0ZJ23"/>
<dbReference type="GeneID" id="4025086"/>
<dbReference type="KEGG" id="vvi:4025086"/>
<dbReference type="InParanoid" id="Q0ZJ23"/>
<dbReference type="OrthoDB" id="353511at71240"/>
<dbReference type="Proteomes" id="UP000009183">
    <property type="component" value="Chloroplast"/>
</dbReference>
<dbReference type="GO" id="GO:0009535">
    <property type="term" value="C:chloroplast thylakoid membrane"/>
    <property type="evidence" value="ECO:0007669"/>
    <property type="project" value="UniProtKB-SubCell"/>
</dbReference>
<dbReference type="GO" id="GO:0009539">
    <property type="term" value="C:photosystem II reaction center"/>
    <property type="evidence" value="ECO:0007669"/>
    <property type="project" value="InterPro"/>
</dbReference>
<dbReference type="GO" id="GO:0015979">
    <property type="term" value="P:photosynthesis"/>
    <property type="evidence" value="ECO:0007669"/>
    <property type="project" value="UniProtKB-UniRule"/>
</dbReference>
<dbReference type="GO" id="GO:0042549">
    <property type="term" value="P:photosystem II stabilization"/>
    <property type="evidence" value="ECO:0007669"/>
    <property type="project" value="InterPro"/>
</dbReference>
<dbReference type="FunFam" id="1.10.287.740:FF:000001">
    <property type="entry name" value="Photosystem II reaction center protein Z"/>
    <property type="match status" value="1"/>
</dbReference>
<dbReference type="Gene3D" id="1.10.287.740">
    <property type="entry name" value="Photosystem II PsbZ, reaction centre"/>
    <property type="match status" value="1"/>
</dbReference>
<dbReference type="HAMAP" id="MF_00644">
    <property type="entry name" value="PSII_PsbZ"/>
    <property type="match status" value="1"/>
</dbReference>
<dbReference type="InterPro" id="IPR002644">
    <property type="entry name" value="PSII_PsbZ"/>
</dbReference>
<dbReference type="InterPro" id="IPR036512">
    <property type="entry name" value="PSII_PsbZ_sf"/>
</dbReference>
<dbReference type="NCBIfam" id="TIGR03043">
    <property type="entry name" value="PS_II_psbZ"/>
    <property type="match status" value="1"/>
</dbReference>
<dbReference type="PANTHER" id="PTHR34971">
    <property type="entry name" value="PHOTOSYSTEM II REACTION CENTER PROTEIN Z"/>
    <property type="match status" value="1"/>
</dbReference>
<dbReference type="PANTHER" id="PTHR34971:SF2">
    <property type="entry name" value="PHOTOSYSTEM II REACTION CENTER PROTEIN Z"/>
    <property type="match status" value="1"/>
</dbReference>
<dbReference type="Pfam" id="PF01737">
    <property type="entry name" value="Ycf9"/>
    <property type="match status" value="1"/>
</dbReference>
<dbReference type="SUPFAM" id="SSF161055">
    <property type="entry name" value="PsbZ-like"/>
    <property type="match status" value="1"/>
</dbReference>
<sequence>MTIAFQLAVFALIATSSILLISVPVVFASPDGWSSNKNIVFSGTSLWIGLVFLVGILNSLIS</sequence>
<name>PSBZ_VITVI</name>
<feature type="chain" id="PRO_0000277241" description="Photosystem II reaction center protein Z">
    <location>
        <begin position="1"/>
        <end position="62"/>
    </location>
</feature>
<feature type="transmembrane region" description="Helical" evidence="1">
    <location>
        <begin position="8"/>
        <end position="28"/>
    </location>
</feature>
<feature type="transmembrane region" description="Helical" evidence="1">
    <location>
        <begin position="41"/>
        <end position="61"/>
    </location>
</feature>
<reference key="1">
    <citation type="journal article" date="2006" name="BMC Evol. Biol.">
        <title>Phylogenetic analyses of Vitis (Vitaceae) based on complete chloroplast genome sequences: effects of taxon sampling and phylogenetic methods on resolving relationships among rosids.</title>
        <authorList>
            <person name="Jansen R.K."/>
            <person name="Kaittanis C."/>
            <person name="Lee S.-B."/>
            <person name="Saski C."/>
            <person name="Tomkins J."/>
            <person name="Alverson A.J."/>
            <person name="Daniell H."/>
        </authorList>
    </citation>
    <scope>NUCLEOTIDE SEQUENCE [LARGE SCALE GENOMIC DNA]</scope>
    <source>
        <strain>cv. Maxxa</strain>
    </source>
</reference>
<evidence type="ECO:0000255" key="1">
    <source>
        <dbReference type="HAMAP-Rule" id="MF_00644"/>
    </source>
</evidence>
<accession>Q0ZJ23</accession>
<comment type="function">
    <text evidence="1">May control the interaction of photosystem II (PSII) cores with the light-harvesting antenna, regulates electron flow through the 2 photosystem reaction centers. PSII is a light-driven water plastoquinone oxidoreductase, using light energy to abstract electrons from H(2)O, generating a proton gradient subsequently used for ATP formation.</text>
</comment>
<comment type="subunit">
    <text evidence="1">PSII is composed of 1 copy each of membrane proteins PsbA, PsbB, PsbC, PsbD, PsbE, PsbF, PsbH, PsbI, PsbJ, PsbK, PsbL, PsbM, PsbT, PsbY, PsbZ, Psb30/Ycf12, at least 3 peripheral proteins of the oxygen-evolving complex and a large number of cofactors. It forms dimeric complexes.</text>
</comment>
<comment type="subcellular location">
    <subcellularLocation>
        <location evidence="1">Plastid</location>
        <location evidence="1">Chloroplast thylakoid membrane</location>
        <topology evidence="1">Multi-pass membrane protein</topology>
    </subcellularLocation>
</comment>
<comment type="similarity">
    <text evidence="1">Belongs to the PsbZ family.</text>
</comment>
<proteinExistence type="inferred from homology"/>